<dbReference type="EMBL" id="AF166114">
    <property type="protein sequence ID" value="AAF43856.1"/>
    <property type="molecule type" value="Genomic_DNA"/>
</dbReference>
<dbReference type="RefSeq" id="NP_038416.1">
    <property type="nucleotide sequence ID" value="NC_002186.1"/>
</dbReference>
<dbReference type="SMR" id="Q9MUP4"/>
<dbReference type="GeneID" id="800958"/>
<dbReference type="GO" id="GO:0009535">
    <property type="term" value="C:chloroplast thylakoid membrane"/>
    <property type="evidence" value="ECO:0007669"/>
    <property type="project" value="UniProtKB-SubCell"/>
</dbReference>
<dbReference type="GO" id="GO:0009522">
    <property type="term" value="C:photosystem I"/>
    <property type="evidence" value="ECO:0007669"/>
    <property type="project" value="UniProtKB-KW"/>
</dbReference>
<dbReference type="GO" id="GO:0015979">
    <property type="term" value="P:photosynthesis"/>
    <property type="evidence" value="ECO:0007669"/>
    <property type="project" value="UniProtKB-UniRule"/>
</dbReference>
<dbReference type="Gene3D" id="1.20.5.510">
    <property type="entry name" value="Single helix bin"/>
    <property type="match status" value="1"/>
</dbReference>
<dbReference type="HAMAP" id="MF_00522">
    <property type="entry name" value="PSI_PsaJ"/>
    <property type="match status" value="1"/>
</dbReference>
<dbReference type="InterPro" id="IPR002615">
    <property type="entry name" value="PSI_PsaJ"/>
</dbReference>
<dbReference type="InterPro" id="IPR036062">
    <property type="entry name" value="PSI_PsaJ_sf"/>
</dbReference>
<dbReference type="PANTHER" id="PTHR36082">
    <property type="match status" value="1"/>
</dbReference>
<dbReference type="PANTHER" id="PTHR36082:SF2">
    <property type="entry name" value="PHOTOSYSTEM I REACTION CENTER SUBUNIT IX"/>
    <property type="match status" value="1"/>
</dbReference>
<dbReference type="Pfam" id="PF01701">
    <property type="entry name" value="PSI_PsaJ"/>
    <property type="match status" value="1"/>
</dbReference>
<dbReference type="SUPFAM" id="SSF81544">
    <property type="entry name" value="Subunit IX of photosystem I reaction centre, PsaJ"/>
    <property type="match status" value="1"/>
</dbReference>
<keyword id="KW-0150">Chloroplast</keyword>
<keyword id="KW-0472">Membrane</keyword>
<keyword id="KW-0602">Photosynthesis</keyword>
<keyword id="KW-0603">Photosystem I</keyword>
<keyword id="KW-0934">Plastid</keyword>
<keyword id="KW-0793">Thylakoid</keyword>
<keyword id="KW-0812">Transmembrane</keyword>
<keyword id="KW-1133">Transmembrane helix</keyword>
<gene>
    <name evidence="1" type="primary">psaJ</name>
</gene>
<proteinExistence type="inferred from homology"/>
<comment type="function">
    <text evidence="1">May help in the organization of the PsaE and PsaF subunits.</text>
</comment>
<comment type="subcellular location">
    <subcellularLocation>
        <location evidence="1">Plastid</location>
        <location evidence="1">Chloroplast thylakoid membrane</location>
        <topology evidence="1">Single-pass membrane protein</topology>
    </subcellularLocation>
</comment>
<comment type="similarity">
    <text evidence="1">Belongs to the PsaJ family.</text>
</comment>
<geneLocation type="chloroplast"/>
<name>PSAJ_MESVI</name>
<sequence>MQDFQKYLSTAPVLATIWFIILAGLLIEINRFFPDALLVPMK</sequence>
<reference key="1">
    <citation type="journal article" date="2000" name="Nature">
        <title>Ancestral chloroplast genome in Mesostigma viride reveals an early branch of green plant evolution.</title>
        <authorList>
            <person name="Lemieux C."/>
            <person name="Otis C."/>
            <person name="Turmel M."/>
        </authorList>
    </citation>
    <scope>NUCLEOTIDE SEQUENCE [LARGE SCALE GENOMIC DNA]</scope>
    <source>
        <strain>NIES-296 / KY-14 / CCMP 2046</strain>
    </source>
</reference>
<organism>
    <name type="scientific">Mesostigma viride</name>
    <name type="common">Green alga</name>
    <dbReference type="NCBI Taxonomy" id="41882"/>
    <lineage>
        <taxon>Eukaryota</taxon>
        <taxon>Viridiplantae</taxon>
        <taxon>Streptophyta</taxon>
        <taxon>Mesostigmatophyceae</taxon>
        <taxon>Mesostigmatales</taxon>
        <taxon>Mesostigmataceae</taxon>
        <taxon>Mesostigma</taxon>
    </lineage>
</organism>
<evidence type="ECO:0000255" key="1">
    <source>
        <dbReference type="HAMAP-Rule" id="MF_00522"/>
    </source>
</evidence>
<feature type="chain" id="PRO_0000207797" description="Photosystem I reaction center subunit IX">
    <location>
        <begin position="1"/>
        <end position="42"/>
    </location>
</feature>
<feature type="transmembrane region" description="Helical" evidence="1">
    <location>
        <begin position="7"/>
        <end position="27"/>
    </location>
</feature>
<protein>
    <recommendedName>
        <fullName evidence="1">Photosystem I reaction center subunit IX</fullName>
    </recommendedName>
    <alternativeName>
        <fullName evidence="1">PSI-J</fullName>
    </alternativeName>
</protein>
<accession>Q9MUP4</accession>